<feature type="chain" id="PRO_1000015347" description="Large-conductance mechanosensitive channel">
    <location>
        <begin position="1"/>
        <end position="129"/>
    </location>
</feature>
<feature type="transmembrane region" description="Helical" evidence="1">
    <location>
        <begin position="10"/>
        <end position="30"/>
    </location>
</feature>
<feature type="transmembrane region" description="Helical" evidence="1">
    <location>
        <begin position="76"/>
        <end position="96"/>
    </location>
</feature>
<reference key="1">
    <citation type="journal article" date="2008" name="J. Bacteriol.">
        <title>The complete genome sequence of Actinobacillus pleuropneumoniae L20 (serotype 5b).</title>
        <authorList>
            <person name="Foote S.J."/>
            <person name="Bosse J.T."/>
            <person name="Bouevitch A.B."/>
            <person name="Langford P.R."/>
            <person name="Young N.M."/>
            <person name="Nash J.H.E."/>
        </authorList>
    </citation>
    <scope>NUCLEOTIDE SEQUENCE [LARGE SCALE GENOMIC DNA]</scope>
    <source>
        <strain>L20</strain>
    </source>
</reference>
<gene>
    <name evidence="1" type="primary">mscL</name>
    <name type="ordered locus">APL_1592</name>
</gene>
<sequence length="129" mass="13846">MSILKEFREFAVKGNVVDMAVGVIIGGAFGKIVSSLVSDVVMPPIGWLIGGVDFKDLAIEIAPAKEGAEAVMLKYGAFIQNVFDFLIIAIAVFGMVKVINKIKKPAEAAPAEPTAEEKLLTEIRDLLKK</sequence>
<evidence type="ECO:0000255" key="1">
    <source>
        <dbReference type="HAMAP-Rule" id="MF_00115"/>
    </source>
</evidence>
<organism>
    <name type="scientific">Actinobacillus pleuropneumoniae serotype 5b (strain L20)</name>
    <dbReference type="NCBI Taxonomy" id="416269"/>
    <lineage>
        <taxon>Bacteria</taxon>
        <taxon>Pseudomonadati</taxon>
        <taxon>Pseudomonadota</taxon>
        <taxon>Gammaproteobacteria</taxon>
        <taxon>Pasteurellales</taxon>
        <taxon>Pasteurellaceae</taxon>
        <taxon>Actinobacillus</taxon>
    </lineage>
</organism>
<accession>A3N2P0</accession>
<dbReference type="EMBL" id="CP000569">
    <property type="protein sequence ID" value="ABN74676.1"/>
    <property type="molecule type" value="Genomic_DNA"/>
</dbReference>
<dbReference type="RefSeq" id="WP_005620517.1">
    <property type="nucleotide sequence ID" value="NC_009053.1"/>
</dbReference>
<dbReference type="SMR" id="A3N2P0"/>
<dbReference type="STRING" id="416269.APL_1592"/>
<dbReference type="EnsemblBacteria" id="ABN74676">
    <property type="protein sequence ID" value="ABN74676"/>
    <property type="gene ID" value="APL_1592"/>
</dbReference>
<dbReference type="GeneID" id="48599878"/>
<dbReference type="KEGG" id="apl:APL_1592"/>
<dbReference type="eggNOG" id="COG1970">
    <property type="taxonomic scope" value="Bacteria"/>
</dbReference>
<dbReference type="HOGENOM" id="CLU_095787_0_0_6"/>
<dbReference type="Proteomes" id="UP000001432">
    <property type="component" value="Chromosome"/>
</dbReference>
<dbReference type="GO" id="GO:0005886">
    <property type="term" value="C:plasma membrane"/>
    <property type="evidence" value="ECO:0007669"/>
    <property type="project" value="UniProtKB-SubCell"/>
</dbReference>
<dbReference type="GO" id="GO:0008381">
    <property type="term" value="F:mechanosensitive monoatomic ion channel activity"/>
    <property type="evidence" value="ECO:0007669"/>
    <property type="project" value="UniProtKB-UniRule"/>
</dbReference>
<dbReference type="FunFam" id="1.10.1200.120:FF:000001">
    <property type="entry name" value="Large-conductance mechanosensitive channel"/>
    <property type="match status" value="1"/>
</dbReference>
<dbReference type="Gene3D" id="1.10.1200.120">
    <property type="entry name" value="Large-conductance mechanosensitive channel, MscL, domain 1"/>
    <property type="match status" value="1"/>
</dbReference>
<dbReference type="HAMAP" id="MF_00115">
    <property type="entry name" value="MscL"/>
    <property type="match status" value="1"/>
</dbReference>
<dbReference type="InterPro" id="IPR019823">
    <property type="entry name" value="Mechanosensitive_channel_CS"/>
</dbReference>
<dbReference type="InterPro" id="IPR001185">
    <property type="entry name" value="MS_channel"/>
</dbReference>
<dbReference type="InterPro" id="IPR037673">
    <property type="entry name" value="MSC/AndL"/>
</dbReference>
<dbReference type="InterPro" id="IPR036019">
    <property type="entry name" value="MscL_channel"/>
</dbReference>
<dbReference type="NCBIfam" id="TIGR00220">
    <property type="entry name" value="mscL"/>
    <property type="match status" value="1"/>
</dbReference>
<dbReference type="NCBIfam" id="NF001843">
    <property type="entry name" value="PRK00567.1-4"/>
    <property type="match status" value="1"/>
</dbReference>
<dbReference type="PANTHER" id="PTHR30266:SF2">
    <property type="entry name" value="LARGE-CONDUCTANCE MECHANOSENSITIVE CHANNEL"/>
    <property type="match status" value="1"/>
</dbReference>
<dbReference type="PANTHER" id="PTHR30266">
    <property type="entry name" value="MECHANOSENSITIVE CHANNEL MSCL"/>
    <property type="match status" value="1"/>
</dbReference>
<dbReference type="Pfam" id="PF01741">
    <property type="entry name" value="MscL"/>
    <property type="match status" value="1"/>
</dbReference>
<dbReference type="PRINTS" id="PR01264">
    <property type="entry name" value="MECHCHANNEL"/>
</dbReference>
<dbReference type="SUPFAM" id="SSF81330">
    <property type="entry name" value="Gated mechanosensitive channel"/>
    <property type="match status" value="1"/>
</dbReference>
<dbReference type="PROSITE" id="PS01327">
    <property type="entry name" value="MSCL"/>
    <property type="match status" value="1"/>
</dbReference>
<comment type="function">
    <text evidence="1">Channel that opens in response to stretch forces in the membrane lipid bilayer. May participate in the regulation of osmotic pressure changes within the cell.</text>
</comment>
<comment type="subunit">
    <text evidence="1">Homopentamer.</text>
</comment>
<comment type="subcellular location">
    <subcellularLocation>
        <location evidence="1">Cell inner membrane</location>
        <topology evidence="1">Multi-pass membrane protein</topology>
    </subcellularLocation>
</comment>
<comment type="similarity">
    <text evidence="1">Belongs to the MscL family.</text>
</comment>
<keyword id="KW-0997">Cell inner membrane</keyword>
<keyword id="KW-1003">Cell membrane</keyword>
<keyword id="KW-0407">Ion channel</keyword>
<keyword id="KW-0406">Ion transport</keyword>
<keyword id="KW-0472">Membrane</keyword>
<keyword id="KW-1185">Reference proteome</keyword>
<keyword id="KW-0812">Transmembrane</keyword>
<keyword id="KW-1133">Transmembrane helix</keyword>
<keyword id="KW-0813">Transport</keyword>
<proteinExistence type="inferred from homology"/>
<protein>
    <recommendedName>
        <fullName evidence="1">Large-conductance mechanosensitive channel</fullName>
    </recommendedName>
</protein>
<name>MSCL_ACTP2</name>